<organism>
    <name type="scientific">Marinobacter nauticus (strain ATCC 700491 / DSM 11845 / VT8)</name>
    <name type="common">Marinobacter aquaeolei</name>
    <dbReference type="NCBI Taxonomy" id="351348"/>
    <lineage>
        <taxon>Bacteria</taxon>
        <taxon>Pseudomonadati</taxon>
        <taxon>Pseudomonadota</taxon>
        <taxon>Gammaproteobacteria</taxon>
        <taxon>Pseudomonadales</taxon>
        <taxon>Marinobacteraceae</taxon>
        <taxon>Marinobacter</taxon>
    </lineage>
</organism>
<feature type="chain" id="PRO_1000064732" description="Ribosome maturation factor RimP">
    <location>
        <begin position="1"/>
        <end position="153"/>
    </location>
</feature>
<dbReference type="EMBL" id="CP000514">
    <property type="protein sequence ID" value="ABM20421.1"/>
    <property type="molecule type" value="Genomic_DNA"/>
</dbReference>
<dbReference type="RefSeq" id="WP_011786762.1">
    <property type="nucleotide sequence ID" value="NC_008740.1"/>
</dbReference>
<dbReference type="SMR" id="A1U602"/>
<dbReference type="STRING" id="351348.Maqu_3350"/>
<dbReference type="GeneID" id="31822555"/>
<dbReference type="KEGG" id="maq:Maqu_3350"/>
<dbReference type="eggNOG" id="COG0779">
    <property type="taxonomic scope" value="Bacteria"/>
</dbReference>
<dbReference type="HOGENOM" id="CLU_070525_1_1_6"/>
<dbReference type="OrthoDB" id="9805006at2"/>
<dbReference type="Proteomes" id="UP000000998">
    <property type="component" value="Chromosome"/>
</dbReference>
<dbReference type="GO" id="GO:0005829">
    <property type="term" value="C:cytosol"/>
    <property type="evidence" value="ECO:0007669"/>
    <property type="project" value="TreeGrafter"/>
</dbReference>
<dbReference type="GO" id="GO:0000028">
    <property type="term" value="P:ribosomal small subunit assembly"/>
    <property type="evidence" value="ECO:0007669"/>
    <property type="project" value="TreeGrafter"/>
</dbReference>
<dbReference type="GO" id="GO:0006412">
    <property type="term" value="P:translation"/>
    <property type="evidence" value="ECO:0007669"/>
    <property type="project" value="TreeGrafter"/>
</dbReference>
<dbReference type="CDD" id="cd01734">
    <property type="entry name" value="YlxS_C"/>
    <property type="match status" value="1"/>
</dbReference>
<dbReference type="FunFam" id="3.30.300.70:FF:000001">
    <property type="entry name" value="Ribosome maturation factor RimP"/>
    <property type="match status" value="1"/>
</dbReference>
<dbReference type="Gene3D" id="2.30.30.180">
    <property type="entry name" value="Ribosome maturation factor RimP, C-terminal domain"/>
    <property type="match status" value="1"/>
</dbReference>
<dbReference type="Gene3D" id="3.30.300.70">
    <property type="entry name" value="RimP-like superfamily, N-terminal"/>
    <property type="match status" value="1"/>
</dbReference>
<dbReference type="HAMAP" id="MF_01077">
    <property type="entry name" value="RimP"/>
    <property type="match status" value="1"/>
</dbReference>
<dbReference type="InterPro" id="IPR003728">
    <property type="entry name" value="Ribosome_maturation_RimP"/>
</dbReference>
<dbReference type="InterPro" id="IPR028998">
    <property type="entry name" value="RimP_C"/>
</dbReference>
<dbReference type="InterPro" id="IPR036847">
    <property type="entry name" value="RimP_C_sf"/>
</dbReference>
<dbReference type="InterPro" id="IPR028989">
    <property type="entry name" value="RimP_N"/>
</dbReference>
<dbReference type="InterPro" id="IPR035956">
    <property type="entry name" value="RimP_N_sf"/>
</dbReference>
<dbReference type="NCBIfam" id="NF000927">
    <property type="entry name" value="PRK00092.1-1"/>
    <property type="match status" value="1"/>
</dbReference>
<dbReference type="PANTHER" id="PTHR33867">
    <property type="entry name" value="RIBOSOME MATURATION FACTOR RIMP"/>
    <property type="match status" value="1"/>
</dbReference>
<dbReference type="PANTHER" id="PTHR33867:SF1">
    <property type="entry name" value="RIBOSOME MATURATION FACTOR RIMP"/>
    <property type="match status" value="1"/>
</dbReference>
<dbReference type="Pfam" id="PF17384">
    <property type="entry name" value="DUF150_C"/>
    <property type="match status" value="1"/>
</dbReference>
<dbReference type="Pfam" id="PF02576">
    <property type="entry name" value="RimP_N"/>
    <property type="match status" value="1"/>
</dbReference>
<dbReference type="SUPFAM" id="SSF74942">
    <property type="entry name" value="YhbC-like, C-terminal domain"/>
    <property type="match status" value="1"/>
</dbReference>
<dbReference type="SUPFAM" id="SSF75420">
    <property type="entry name" value="YhbC-like, N-terminal domain"/>
    <property type="match status" value="1"/>
</dbReference>
<comment type="function">
    <text evidence="1">Required for maturation of 30S ribosomal subunits.</text>
</comment>
<comment type="subcellular location">
    <subcellularLocation>
        <location evidence="1">Cytoplasm</location>
    </subcellularLocation>
</comment>
<comment type="similarity">
    <text evidence="1">Belongs to the RimP family.</text>
</comment>
<proteinExistence type="inferred from homology"/>
<evidence type="ECO:0000255" key="1">
    <source>
        <dbReference type="HAMAP-Rule" id="MF_01077"/>
    </source>
</evidence>
<protein>
    <recommendedName>
        <fullName evidence="1">Ribosome maturation factor RimP</fullName>
    </recommendedName>
</protein>
<keyword id="KW-0963">Cytoplasm</keyword>
<keyword id="KW-0690">Ribosome biogenesis</keyword>
<sequence length="153" mass="17479">MSAKLKQLEDILRPVVEGLGYEFWGIEFRSHGHHSKLRVFIDDAENGIAIDDCEKVSRQVSGVMDVEDPIQTEYTLEVSSPGMDRPLFRLEQYEAFIGHKVQIKLRMAFEGRRKFLGLIKGVEGDDVVVVVDDHEYLLPFDSIEKANIVPVFE</sequence>
<name>RIMP_MARN8</name>
<accession>A1U602</accession>
<gene>
    <name evidence="1" type="primary">rimP</name>
    <name type="ordered locus">Maqu_3350</name>
</gene>
<reference key="1">
    <citation type="journal article" date="2011" name="Appl. Environ. Microbiol.">
        <title>Genomic potential of Marinobacter aquaeolei, a biogeochemical 'opportunitroph'.</title>
        <authorList>
            <person name="Singer E."/>
            <person name="Webb E.A."/>
            <person name="Nelson W.C."/>
            <person name="Heidelberg J.F."/>
            <person name="Ivanova N."/>
            <person name="Pati A."/>
            <person name="Edwards K.J."/>
        </authorList>
    </citation>
    <scope>NUCLEOTIDE SEQUENCE [LARGE SCALE GENOMIC DNA]</scope>
    <source>
        <strain>ATCC 700491 / DSM 11845 / VT8</strain>
    </source>
</reference>